<evidence type="ECO:0000255" key="1">
    <source>
        <dbReference type="HAMAP-Rule" id="MF_01341"/>
    </source>
</evidence>
<evidence type="ECO:0000256" key="2">
    <source>
        <dbReference type="SAM" id="MobiDB-lite"/>
    </source>
</evidence>
<evidence type="ECO:0000305" key="3"/>
<keyword id="KW-1185">Reference proteome</keyword>
<keyword id="KW-0687">Ribonucleoprotein</keyword>
<keyword id="KW-0689">Ribosomal protein</keyword>
<keyword id="KW-0694">RNA-binding</keyword>
<keyword id="KW-0699">rRNA-binding</keyword>
<dbReference type="EMBL" id="AE013598">
    <property type="protein sequence ID" value="AAW76817.1"/>
    <property type="molecule type" value="Genomic_DNA"/>
</dbReference>
<dbReference type="SMR" id="Q5GWV4"/>
<dbReference type="STRING" id="291331.XOO3563"/>
<dbReference type="KEGG" id="xoo:XOO3563"/>
<dbReference type="HOGENOM" id="CLU_055188_4_2_6"/>
<dbReference type="Proteomes" id="UP000006735">
    <property type="component" value="Chromosome"/>
</dbReference>
<dbReference type="GO" id="GO:0022625">
    <property type="term" value="C:cytosolic large ribosomal subunit"/>
    <property type="evidence" value="ECO:0007669"/>
    <property type="project" value="TreeGrafter"/>
</dbReference>
<dbReference type="GO" id="GO:0019843">
    <property type="term" value="F:rRNA binding"/>
    <property type="evidence" value="ECO:0007669"/>
    <property type="project" value="UniProtKB-UniRule"/>
</dbReference>
<dbReference type="GO" id="GO:0003735">
    <property type="term" value="F:structural constituent of ribosome"/>
    <property type="evidence" value="ECO:0007669"/>
    <property type="project" value="InterPro"/>
</dbReference>
<dbReference type="GO" id="GO:0006412">
    <property type="term" value="P:translation"/>
    <property type="evidence" value="ECO:0007669"/>
    <property type="project" value="UniProtKB-UniRule"/>
</dbReference>
<dbReference type="FunFam" id="3.100.10.10:FF:000008">
    <property type="entry name" value="50S ribosomal protein L15"/>
    <property type="match status" value="1"/>
</dbReference>
<dbReference type="Gene3D" id="3.100.10.10">
    <property type="match status" value="1"/>
</dbReference>
<dbReference type="HAMAP" id="MF_01341">
    <property type="entry name" value="Ribosomal_uL15"/>
    <property type="match status" value="1"/>
</dbReference>
<dbReference type="InterPro" id="IPR030878">
    <property type="entry name" value="Ribosomal_uL15"/>
</dbReference>
<dbReference type="InterPro" id="IPR021131">
    <property type="entry name" value="Ribosomal_uL15/eL18"/>
</dbReference>
<dbReference type="InterPro" id="IPR036227">
    <property type="entry name" value="Ribosomal_uL15/eL18_sf"/>
</dbReference>
<dbReference type="InterPro" id="IPR005749">
    <property type="entry name" value="Ribosomal_uL15_bac-type"/>
</dbReference>
<dbReference type="InterPro" id="IPR001196">
    <property type="entry name" value="Ribosomal_uL15_CS"/>
</dbReference>
<dbReference type="NCBIfam" id="TIGR01071">
    <property type="entry name" value="rplO_bact"/>
    <property type="match status" value="1"/>
</dbReference>
<dbReference type="PANTHER" id="PTHR12934">
    <property type="entry name" value="50S RIBOSOMAL PROTEIN L15"/>
    <property type="match status" value="1"/>
</dbReference>
<dbReference type="PANTHER" id="PTHR12934:SF11">
    <property type="entry name" value="LARGE RIBOSOMAL SUBUNIT PROTEIN UL15M"/>
    <property type="match status" value="1"/>
</dbReference>
<dbReference type="Pfam" id="PF00828">
    <property type="entry name" value="Ribosomal_L27A"/>
    <property type="match status" value="1"/>
</dbReference>
<dbReference type="SUPFAM" id="SSF52080">
    <property type="entry name" value="Ribosomal proteins L15p and L18e"/>
    <property type="match status" value="1"/>
</dbReference>
<dbReference type="PROSITE" id="PS00475">
    <property type="entry name" value="RIBOSOMAL_L15"/>
    <property type="match status" value="1"/>
</dbReference>
<sequence length="152" mass="15947">MRSNPMTLRLNDLKPADGARTQRTRVGRGIGSGLGKTAGRGHKGSFARKGGGKIKAGFEGGQTPMQRRLPKIGFRSKMARDTAEVLSYQLDKLDAGDVDFVALRAANLVPSRAKKAKIVLKGELSKKFVLKGVAATAGAKAAIEAAGGSVEE</sequence>
<proteinExistence type="inferred from homology"/>
<protein>
    <recommendedName>
        <fullName evidence="1">Large ribosomal subunit protein uL15</fullName>
    </recommendedName>
    <alternativeName>
        <fullName evidence="3">50S ribosomal protein L15</fullName>
    </alternativeName>
</protein>
<gene>
    <name evidence="1" type="primary">rplO</name>
    <name type="ordered locus">XOO3563</name>
</gene>
<reference key="1">
    <citation type="journal article" date="2005" name="Nucleic Acids Res.">
        <title>The genome sequence of Xanthomonas oryzae pathovar oryzae KACC10331, the bacterial blight pathogen of rice.</title>
        <authorList>
            <person name="Lee B.-M."/>
            <person name="Park Y.-J."/>
            <person name="Park D.-S."/>
            <person name="Kang H.-W."/>
            <person name="Kim J.-G."/>
            <person name="Song E.-S."/>
            <person name="Park I.-C."/>
            <person name="Yoon U.-H."/>
            <person name="Hahn J.-H."/>
            <person name="Koo B.-S."/>
            <person name="Lee G.-B."/>
            <person name="Kim H."/>
            <person name="Park H.-S."/>
            <person name="Yoon K.-O."/>
            <person name="Kim J.-H."/>
            <person name="Jung C.-H."/>
            <person name="Koh N.-H."/>
            <person name="Seo J.-S."/>
            <person name="Go S.-J."/>
        </authorList>
    </citation>
    <scope>NUCLEOTIDE SEQUENCE [LARGE SCALE GENOMIC DNA]</scope>
    <source>
        <strain>KACC10331 / KXO85</strain>
    </source>
</reference>
<feature type="chain" id="PRO_0000251589" description="Large ribosomal subunit protein uL15">
    <location>
        <begin position="1"/>
        <end position="152"/>
    </location>
</feature>
<feature type="region of interest" description="Disordered" evidence="2">
    <location>
        <begin position="1"/>
        <end position="66"/>
    </location>
</feature>
<feature type="compositionally biased region" description="Gly residues" evidence="2">
    <location>
        <begin position="28"/>
        <end position="38"/>
    </location>
</feature>
<feature type="compositionally biased region" description="Basic residues" evidence="2">
    <location>
        <begin position="39"/>
        <end position="52"/>
    </location>
</feature>
<name>RL15_XANOR</name>
<accession>Q5GWV4</accession>
<comment type="function">
    <text evidence="1">Binds to the 23S rRNA.</text>
</comment>
<comment type="subunit">
    <text evidence="1">Part of the 50S ribosomal subunit.</text>
</comment>
<comment type="similarity">
    <text evidence="1">Belongs to the universal ribosomal protein uL15 family.</text>
</comment>
<organism>
    <name type="scientific">Xanthomonas oryzae pv. oryzae (strain KACC10331 / KXO85)</name>
    <dbReference type="NCBI Taxonomy" id="291331"/>
    <lineage>
        <taxon>Bacteria</taxon>
        <taxon>Pseudomonadati</taxon>
        <taxon>Pseudomonadota</taxon>
        <taxon>Gammaproteobacteria</taxon>
        <taxon>Lysobacterales</taxon>
        <taxon>Lysobacteraceae</taxon>
        <taxon>Xanthomonas</taxon>
    </lineage>
</organism>